<feature type="chain" id="PRO_0000267358" description="7-methyl-GTP pyrophosphatase">
    <location>
        <begin position="1"/>
        <end position="198"/>
    </location>
</feature>
<feature type="active site" description="Proton acceptor" evidence="1">
    <location>
        <position position="75"/>
    </location>
</feature>
<feature type="site" description="Important for substrate specificity" evidence="1">
    <location>
        <position position="18"/>
    </location>
</feature>
<feature type="site" description="Important for substrate specificity" evidence="1">
    <location>
        <position position="76"/>
    </location>
</feature>
<feature type="site" description="Important for substrate specificity" evidence="1">
    <location>
        <position position="160"/>
    </location>
</feature>
<proteinExistence type="inferred from homology"/>
<accession>Q2YA50</accession>
<evidence type="ECO:0000255" key="1">
    <source>
        <dbReference type="HAMAP-Rule" id="MF_00528"/>
    </source>
</evidence>
<gene>
    <name type="ordered locus">Nmul_A1068</name>
</gene>
<organism>
    <name type="scientific">Nitrosospira multiformis (strain ATCC 25196 / NCIMB 11849 / C 71)</name>
    <dbReference type="NCBI Taxonomy" id="323848"/>
    <lineage>
        <taxon>Bacteria</taxon>
        <taxon>Pseudomonadati</taxon>
        <taxon>Pseudomonadota</taxon>
        <taxon>Betaproteobacteria</taxon>
        <taxon>Nitrosomonadales</taxon>
        <taxon>Nitrosomonadaceae</taxon>
        <taxon>Nitrosospira</taxon>
    </lineage>
</organism>
<reference key="1">
    <citation type="submission" date="2005-08" db="EMBL/GenBank/DDBJ databases">
        <title>Complete sequence of chromosome 1 of Nitrosospira multiformis ATCC 25196.</title>
        <authorList>
            <person name="Copeland A."/>
            <person name="Lucas S."/>
            <person name="Lapidus A."/>
            <person name="Barry K."/>
            <person name="Detter J.C."/>
            <person name="Glavina T."/>
            <person name="Hammon N."/>
            <person name="Israni S."/>
            <person name="Pitluck S."/>
            <person name="Chain P."/>
            <person name="Malfatti S."/>
            <person name="Shin M."/>
            <person name="Vergez L."/>
            <person name="Schmutz J."/>
            <person name="Larimer F."/>
            <person name="Land M."/>
            <person name="Hauser L."/>
            <person name="Kyrpides N."/>
            <person name="Lykidis A."/>
            <person name="Richardson P."/>
        </authorList>
    </citation>
    <scope>NUCLEOTIDE SEQUENCE [LARGE SCALE GENOMIC DNA]</scope>
    <source>
        <strain>ATCC 25196 / NCIMB 11849 / C 71</strain>
    </source>
</reference>
<comment type="function">
    <text evidence="1">Nucleoside triphosphate pyrophosphatase that hydrolyzes 7-methyl-GTP (m(7)GTP). May have a dual role in cell division arrest and in preventing the incorporation of modified nucleotides into cellular nucleic acids.</text>
</comment>
<comment type="catalytic activity">
    <reaction evidence="1">
        <text>N(7)-methyl-GTP + H2O = N(7)-methyl-GMP + diphosphate + H(+)</text>
        <dbReference type="Rhea" id="RHEA:58744"/>
        <dbReference type="ChEBI" id="CHEBI:15377"/>
        <dbReference type="ChEBI" id="CHEBI:15378"/>
        <dbReference type="ChEBI" id="CHEBI:33019"/>
        <dbReference type="ChEBI" id="CHEBI:58285"/>
        <dbReference type="ChEBI" id="CHEBI:87133"/>
    </reaction>
</comment>
<comment type="cofactor">
    <cofactor evidence="1">
        <name>a divalent metal cation</name>
        <dbReference type="ChEBI" id="CHEBI:60240"/>
    </cofactor>
</comment>
<comment type="subcellular location">
    <subcellularLocation>
        <location evidence="1">Cytoplasm</location>
    </subcellularLocation>
</comment>
<comment type="similarity">
    <text evidence="1">Belongs to the Maf family. YceF subfamily.</text>
</comment>
<sequence>MKTQQIAQQLILGSSSIYRRDLLQRLQIPFDVSNPDIDETPLPGETPDATAVRLAAAKTRAVAATHPGALIIGADQVAVFEGIQLGKPLNHLNATRQLQLIRGKEVSFYTALCLFNSAQDTTRARLVPSRVKFRLLSDRQIENYLDKEQPYHCAASSKLEGLGIALIEHMEGEDPTALIGLPLIALVEMLTLEGVEIV</sequence>
<name>NTPPB_NITMU</name>
<keyword id="KW-0963">Cytoplasm</keyword>
<keyword id="KW-0378">Hydrolase</keyword>
<keyword id="KW-0546">Nucleotide metabolism</keyword>
<keyword id="KW-1185">Reference proteome</keyword>
<protein>
    <recommendedName>
        <fullName evidence="1">7-methyl-GTP pyrophosphatase</fullName>
        <shortName evidence="1">m(7)GTP pyrophosphatase</shortName>
        <ecNumber evidence="1">3.6.1.-</ecNumber>
    </recommendedName>
</protein>
<dbReference type="EC" id="3.6.1.-" evidence="1"/>
<dbReference type="EMBL" id="CP000103">
    <property type="protein sequence ID" value="ABB74371.1"/>
    <property type="molecule type" value="Genomic_DNA"/>
</dbReference>
<dbReference type="RefSeq" id="WP_011380416.1">
    <property type="nucleotide sequence ID" value="NC_007614.1"/>
</dbReference>
<dbReference type="SMR" id="Q2YA50"/>
<dbReference type="STRING" id="323848.Nmul_A1068"/>
<dbReference type="KEGG" id="nmu:Nmul_A1068"/>
<dbReference type="eggNOG" id="COG0424">
    <property type="taxonomic scope" value="Bacteria"/>
</dbReference>
<dbReference type="HOGENOM" id="CLU_040416_1_0_4"/>
<dbReference type="Proteomes" id="UP000002718">
    <property type="component" value="Chromosome"/>
</dbReference>
<dbReference type="GO" id="GO:0005737">
    <property type="term" value="C:cytoplasm"/>
    <property type="evidence" value="ECO:0007669"/>
    <property type="project" value="UniProtKB-SubCell"/>
</dbReference>
<dbReference type="GO" id="GO:0047429">
    <property type="term" value="F:nucleoside triphosphate diphosphatase activity"/>
    <property type="evidence" value="ECO:0007669"/>
    <property type="project" value="InterPro"/>
</dbReference>
<dbReference type="GO" id="GO:0009117">
    <property type="term" value="P:nucleotide metabolic process"/>
    <property type="evidence" value="ECO:0007669"/>
    <property type="project" value="UniProtKB-KW"/>
</dbReference>
<dbReference type="CDD" id="cd00555">
    <property type="entry name" value="Maf"/>
    <property type="match status" value="1"/>
</dbReference>
<dbReference type="FunFam" id="3.90.950.10:FF:000005">
    <property type="entry name" value="7-methyl-GTP pyrophosphatase"/>
    <property type="match status" value="1"/>
</dbReference>
<dbReference type="Gene3D" id="3.90.950.10">
    <property type="match status" value="1"/>
</dbReference>
<dbReference type="HAMAP" id="MF_00528">
    <property type="entry name" value="Maf"/>
    <property type="match status" value="1"/>
</dbReference>
<dbReference type="InterPro" id="IPR029001">
    <property type="entry name" value="ITPase-like_fam"/>
</dbReference>
<dbReference type="InterPro" id="IPR003697">
    <property type="entry name" value="Maf-like"/>
</dbReference>
<dbReference type="NCBIfam" id="TIGR00172">
    <property type="entry name" value="maf"/>
    <property type="match status" value="1"/>
</dbReference>
<dbReference type="PANTHER" id="PTHR43213">
    <property type="entry name" value="BIFUNCTIONAL DTTP/UTP PYROPHOSPHATASE/METHYLTRANSFERASE PROTEIN-RELATED"/>
    <property type="match status" value="1"/>
</dbReference>
<dbReference type="PANTHER" id="PTHR43213:SF5">
    <property type="entry name" value="BIFUNCTIONAL DTTP_UTP PYROPHOSPHATASE_METHYLTRANSFERASE PROTEIN-RELATED"/>
    <property type="match status" value="1"/>
</dbReference>
<dbReference type="Pfam" id="PF02545">
    <property type="entry name" value="Maf"/>
    <property type="match status" value="1"/>
</dbReference>
<dbReference type="PIRSF" id="PIRSF006305">
    <property type="entry name" value="Maf"/>
    <property type="match status" value="1"/>
</dbReference>
<dbReference type="SUPFAM" id="SSF52972">
    <property type="entry name" value="ITPase-like"/>
    <property type="match status" value="1"/>
</dbReference>